<feature type="chain" id="PRO_0000300860" description="Phytochrome B">
    <location>
        <begin position="1"/>
        <end position="1171"/>
    </location>
</feature>
<feature type="domain" description="GAF">
    <location>
        <begin position="259"/>
        <end position="442"/>
    </location>
</feature>
<feature type="domain" description="PAS 1" evidence="3">
    <location>
        <begin position="661"/>
        <end position="732"/>
    </location>
</feature>
<feature type="domain" description="PAS 2" evidence="3">
    <location>
        <begin position="795"/>
        <end position="866"/>
    </location>
</feature>
<feature type="domain" description="Histidine kinase" evidence="2">
    <location>
        <begin position="943"/>
        <end position="1161"/>
    </location>
</feature>
<feature type="region of interest" description="Disordered" evidence="4">
    <location>
        <begin position="1"/>
        <end position="53"/>
    </location>
</feature>
<feature type="compositionally biased region" description="Low complexity" evidence="4">
    <location>
        <begin position="1"/>
        <end position="19"/>
    </location>
</feature>
<feature type="compositionally biased region" description="Gly residues" evidence="4">
    <location>
        <begin position="38"/>
        <end position="52"/>
    </location>
</feature>
<feature type="binding site" description="covalent" evidence="1">
    <location>
        <position position="364"/>
    </location>
    <ligand>
        <name>phytochromobilin</name>
        <dbReference type="ChEBI" id="CHEBI:189064"/>
    </ligand>
</feature>
<feature type="sequence conflict" description="In Ref. 1; CAA40795." evidence="5" ref="1">
    <original>K</original>
    <variation>N</variation>
    <location>
        <position position="206"/>
    </location>
</feature>
<feature type="sequence conflict" description="In Ref. 1; CAA40795." evidence="5" ref="1">
    <original>A</original>
    <variation>V</variation>
    <location>
        <position position="245"/>
    </location>
</feature>
<feature type="sequence conflict" description="In Ref. 1; CAA40795." evidence="5" ref="1">
    <original>A</original>
    <variation>G</variation>
    <location>
        <position position="366"/>
    </location>
</feature>
<feature type="sequence conflict" description="In Ref. 1; CAA40795." evidence="5" ref="1">
    <original>Q</original>
    <variation>G</variation>
    <location>
        <position position="457"/>
    </location>
</feature>
<feature type="sequence conflict" description="In Ref. 1; CAA40795." evidence="5" ref="1">
    <original>A</original>
    <variation>D</variation>
    <location>
        <position position="540"/>
    </location>
</feature>
<feature type="sequence conflict" description="In Ref. 1; CAA40795." evidence="5" ref="1">
    <original>S</original>
    <variation>T</variation>
    <location>
        <position position="762"/>
    </location>
</feature>
<reference key="1">
    <citation type="journal article" date="1991" name="Mol. Gen. Genet.">
        <title>phyB is evolutionarily conserved and constitutively expressed in rice seedling shoots.</title>
        <authorList>
            <person name="Dehesh K."/>
            <person name="Tepperman J."/>
            <person name="Christensen A.H."/>
            <person name="Quail P.H."/>
        </authorList>
    </citation>
    <scope>NUCLEOTIDE SEQUENCE [GENOMIC DNA]</scope>
    <source>
        <strain>cv. IR36</strain>
        <tissue>Seedling shoot</tissue>
    </source>
</reference>
<reference key="2">
    <citation type="journal article" date="2005" name="PLoS Biol.">
        <title>The genomes of Oryza sativa: a history of duplications.</title>
        <authorList>
            <person name="Yu J."/>
            <person name="Wang J."/>
            <person name="Lin W."/>
            <person name="Li S."/>
            <person name="Li H."/>
            <person name="Zhou J."/>
            <person name="Ni P."/>
            <person name="Dong W."/>
            <person name="Hu S."/>
            <person name="Zeng C."/>
            <person name="Zhang J."/>
            <person name="Zhang Y."/>
            <person name="Li R."/>
            <person name="Xu Z."/>
            <person name="Li S."/>
            <person name="Li X."/>
            <person name="Zheng H."/>
            <person name="Cong L."/>
            <person name="Lin L."/>
            <person name="Yin J."/>
            <person name="Geng J."/>
            <person name="Li G."/>
            <person name="Shi J."/>
            <person name="Liu J."/>
            <person name="Lv H."/>
            <person name="Li J."/>
            <person name="Wang J."/>
            <person name="Deng Y."/>
            <person name="Ran L."/>
            <person name="Shi X."/>
            <person name="Wang X."/>
            <person name="Wu Q."/>
            <person name="Li C."/>
            <person name="Ren X."/>
            <person name="Wang J."/>
            <person name="Wang X."/>
            <person name="Li D."/>
            <person name="Liu D."/>
            <person name="Zhang X."/>
            <person name="Ji Z."/>
            <person name="Zhao W."/>
            <person name="Sun Y."/>
            <person name="Zhang Z."/>
            <person name="Bao J."/>
            <person name="Han Y."/>
            <person name="Dong L."/>
            <person name="Ji J."/>
            <person name="Chen P."/>
            <person name="Wu S."/>
            <person name="Liu J."/>
            <person name="Xiao Y."/>
            <person name="Bu D."/>
            <person name="Tan J."/>
            <person name="Yang L."/>
            <person name="Ye C."/>
            <person name="Zhang J."/>
            <person name="Xu J."/>
            <person name="Zhou Y."/>
            <person name="Yu Y."/>
            <person name="Zhang B."/>
            <person name="Zhuang S."/>
            <person name="Wei H."/>
            <person name="Liu B."/>
            <person name="Lei M."/>
            <person name="Yu H."/>
            <person name="Li Y."/>
            <person name="Xu H."/>
            <person name="Wei S."/>
            <person name="He X."/>
            <person name="Fang L."/>
            <person name="Zhang Z."/>
            <person name="Zhang Y."/>
            <person name="Huang X."/>
            <person name="Su Z."/>
            <person name="Tong W."/>
            <person name="Li J."/>
            <person name="Tong Z."/>
            <person name="Li S."/>
            <person name="Ye J."/>
            <person name="Wang L."/>
            <person name="Fang L."/>
            <person name="Lei T."/>
            <person name="Chen C.-S."/>
            <person name="Chen H.-C."/>
            <person name="Xu Z."/>
            <person name="Li H."/>
            <person name="Huang H."/>
            <person name="Zhang F."/>
            <person name="Xu H."/>
            <person name="Li N."/>
            <person name="Zhao C."/>
            <person name="Li S."/>
            <person name="Dong L."/>
            <person name="Huang Y."/>
            <person name="Li L."/>
            <person name="Xi Y."/>
            <person name="Qi Q."/>
            <person name="Li W."/>
            <person name="Zhang B."/>
            <person name="Hu W."/>
            <person name="Zhang Y."/>
            <person name="Tian X."/>
            <person name="Jiao Y."/>
            <person name="Liang X."/>
            <person name="Jin J."/>
            <person name="Gao L."/>
            <person name="Zheng W."/>
            <person name="Hao B."/>
            <person name="Liu S.-M."/>
            <person name="Wang W."/>
            <person name="Yuan L."/>
            <person name="Cao M."/>
            <person name="McDermott J."/>
            <person name="Samudrala R."/>
            <person name="Wang J."/>
            <person name="Wong G.K.-S."/>
            <person name="Yang H."/>
        </authorList>
    </citation>
    <scope>NUCLEOTIDE SEQUENCE [LARGE SCALE GENOMIC DNA]</scope>
    <source>
        <strain>cv. 93-11</strain>
    </source>
</reference>
<evidence type="ECO:0000250" key="1"/>
<evidence type="ECO:0000255" key="2">
    <source>
        <dbReference type="PROSITE-ProRule" id="PRU00107"/>
    </source>
</evidence>
<evidence type="ECO:0000255" key="3">
    <source>
        <dbReference type="PROSITE-ProRule" id="PRU00140"/>
    </source>
</evidence>
<evidence type="ECO:0000256" key="4">
    <source>
        <dbReference type="SAM" id="MobiDB-lite"/>
    </source>
</evidence>
<evidence type="ECO:0000305" key="5"/>
<comment type="function">
    <text>Regulatory photoreceptor which exists in two forms that are reversibly interconvertible by light: the Pr form that absorbs maximally in the red region of the spectrum and the Pfr form that absorbs maximally in the far-red region. Photoconversion of Pr to Pfr induces an array of morphogenic responses, whereas reconversion of Pfr to Pr cancels the induction of those responses. Pfr controls the expression of a number of nuclear genes including those encoding the small subunit of ribulose-bisphosphate carboxylase, chlorophyll A/B binding protein, protochlorophyllide reductase, rRNA, etc. It also controls the expression of its own gene(s) in a negative feedback fashion.</text>
</comment>
<comment type="subunit">
    <text>Homodimer.</text>
</comment>
<comment type="PTM">
    <text evidence="1">Contains one covalently linked phytochromobilin chromophore.</text>
</comment>
<comment type="similarity">
    <text evidence="5">Belongs to the phytochrome family.</text>
</comment>
<sequence>MASGSRATPTRSPSSARPAAPRHQHHHSQSSGGSTSRAGGGGGGGGGGGGGAAAAESVSKAVAQYTLDARLHAVFEQSGASGRSFDYTQSLRASPTPSSEQQIAAYLSRIQRGGHIQPFGCTLAVADDSSFRLLAYSENTADLLDLSPHHSVPSLDSSAVPPPVSLGADARLLFAPSSAVLLERAFAAREISLLNPLWIHSRVSSKPFYAILHRIDVGVVIDLEPARTEDPALSIAGAVQSQKLAVRAISRLQALPGGDVKLLCDTVVEHVRELTGYDRVMVYRFHEDEHGEVVAESRRNNLEPYIGLHYPATDIPQASRFLFRQNRVRMIADCHAAPVRVIQDPALTQPLCLVGSTLRSPHGCHAQYMANMGSIASLVMAVIISSGGDDDHNISRGSIPSAMKLWGLVVCHHTSPRCIPFPLRYACEFLMQAFGLQLNMELQLAHQLSEKHILRTQTLLCDMLLRDSPTGIVTQSPSIMDLVKCDGAALYYHGKYYPLGVTPTEVQIKDIIEWLTMCHGDSTGLSTDSLADAGYPGAAALGDAVSGMAVAYITPSDYLFWFRSHTAKEIKWGGAKHHPEDKDDGQRMHPRSSFKAFLEVVKSRSLPWENAEMDAIHSLQLILRDSFRDSAEGTSNSKAIVNGQVQLGELELRGIDELSSVAREMVRLIETATVPIFAVDTDGCINGWNAKVAELTGLSVEEAMGKSLVNDLIFKESEETVNKLLSRALRGDEDKNVEIKLKTFGPEQSKGPIFVIVNACSSRDYTKNIVGVCFVGQDVTGQKVVMDKFINIQGDYKAIVHNPNPLIPPIFASDENTCCSEWNTAMEKLTGWSRGEVVGKLLVGEVFGNCCRLKGPDALTKFMIVLHNAIGGQDCEKFPFSFFDKNGKYVQALLTANTRSRMDGEAIGAFCFLQIASPELQQAFEIQRHHEKKCYARMKELAYIYQEIKNPLNGIRFTNSLLEMTDLKDDQRQFLETSTACEKQMSKIVKDASLQSIEDGSLVLEKGEFSLGSVMNAVVSQVMIQLRERDLQLIRDIPDEIKEASAYGDQYRIQQVLCDFLLSMVRFAPAENGWVEIQVRPNIKQNSDGTDTMLFPFRFACPGEGLPPEIVQDMFSNSRWTTQEGIGLSICRKILKLMGGEVQYIRESERSFFHIVLELPQPQQAASRGTS</sequence>
<organism>
    <name type="scientific">Oryza sativa subsp. indica</name>
    <name type="common">Rice</name>
    <dbReference type="NCBI Taxonomy" id="39946"/>
    <lineage>
        <taxon>Eukaryota</taxon>
        <taxon>Viridiplantae</taxon>
        <taxon>Streptophyta</taxon>
        <taxon>Embryophyta</taxon>
        <taxon>Tracheophyta</taxon>
        <taxon>Spermatophyta</taxon>
        <taxon>Magnoliopsida</taxon>
        <taxon>Liliopsida</taxon>
        <taxon>Poales</taxon>
        <taxon>Poaceae</taxon>
        <taxon>BOP clade</taxon>
        <taxon>Oryzoideae</taxon>
        <taxon>Oryzeae</taxon>
        <taxon>Oryzinae</taxon>
        <taxon>Oryza</taxon>
        <taxon>Oryza sativa</taxon>
    </lineage>
</organism>
<dbReference type="EMBL" id="X57563">
    <property type="protein sequence ID" value="CAA40795.2"/>
    <property type="molecule type" value="Genomic_DNA"/>
</dbReference>
<dbReference type="EMBL" id="CM000128">
    <property type="status" value="NOT_ANNOTATED_CDS"/>
    <property type="molecule type" value="Genomic_DNA"/>
</dbReference>
<dbReference type="PIR" id="S14065">
    <property type="entry name" value="S14065"/>
</dbReference>
<dbReference type="BMRB" id="A2XFW2"/>
<dbReference type="SMR" id="A2XFW2"/>
<dbReference type="STRING" id="39946.A2XFW2"/>
<dbReference type="Proteomes" id="UP000007015">
    <property type="component" value="Chromosome 3"/>
</dbReference>
<dbReference type="GO" id="GO:0000155">
    <property type="term" value="F:phosphorelay sensor kinase activity"/>
    <property type="evidence" value="ECO:0007669"/>
    <property type="project" value="InterPro"/>
</dbReference>
<dbReference type="GO" id="GO:0009881">
    <property type="term" value="F:photoreceptor activity"/>
    <property type="evidence" value="ECO:0007669"/>
    <property type="project" value="UniProtKB-KW"/>
</dbReference>
<dbReference type="GO" id="GO:0042803">
    <property type="term" value="F:protein homodimerization activity"/>
    <property type="evidence" value="ECO:0007669"/>
    <property type="project" value="InterPro"/>
</dbReference>
<dbReference type="GO" id="GO:0009584">
    <property type="term" value="P:detection of visible light"/>
    <property type="evidence" value="ECO:0007669"/>
    <property type="project" value="InterPro"/>
</dbReference>
<dbReference type="GO" id="GO:0009585">
    <property type="term" value="P:red, far-red light phototransduction"/>
    <property type="evidence" value="ECO:0007669"/>
    <property type="project" value="InterPro"/>
</dbReference>
<dbReference type="GO" id="GO:0006355">
    <property type="term" value="P:regulation of DNA-templated transcription"/>
    <property type="evidence" value="ECO:0007669"/>
    <property type="project" value="InterPro"/>
</dbReference>
<dbReference type="CDD" id="cd16932">
    <property type="entry name" value="HATPase_Phy-like"/>
    <property type="match status" value="1"/>
</dbReference>
<dbReference type="CDD" id="cd00082">
    <property type="entry name" value="HisKA"/>
    <property type="match status" value="1"/>
</dbReference>
<dbReference type="CDD" id="cd00130">
    <property type="entry name" value="PAS"/>
    <property type="match status" value="2"/>
</dbReference>
<dbReference type="FunFam" id="1.10.287.130:FF:000029">
    <property type="entry name" value="Phytochrome"/>
    <property type="match status" value="1"/>
</dbReference>
<dbReference type="FunFam" id="3.30.450.20:FF:000034">
    <property type="entry name" value="Phytochrome"/>
    <property type="match status" value="1"/>
</dbReference>
<dbReference type="FunFam" id="3.30.450.20:FF:000039">
    <property type="entry name" value="Phytochrome"/>
    <property type="match status" value="1"/>
</dbReference>
<dbReference type="FunFam" id="3.30.450.270:FF:000001">
    <property type="entry name" value="Phytochrome"/>
    <property type="match status" value="1"/>
</dbReference>
<dbReference type="FunFam" id="3.30.565.10:FF:000044">
    <property type="entry name" value="Phytochrome"/>
    <property type="match status" value="1"/>
</dbReference>
<dbReference type="Gene3D" id="1.10.287.130">
    <property type="match status" value="1"/>
</dbReference>
<dbReference type="Gene3D" id="3.30.450.270">
    <property type="match status" value="1"/>
</dbReference>
<dbReference type="Gene3D" id="3.30.450.40">
    <property type="match status" value="1"/>
</dbReference>
<dbReference type="Gene3D" id="3.30.565.10">
    <property type="entry name" value="Histidine kinase-like ATPase, C-terminal domain"/>
    <property type="match status" value="1"/>
</dbReference>
<dbReference type="Gene3D" id="3.30.450.20">
    <property type="entry name" value="PAS domain"/>
    <property type="match status" value="3"/>
</dbReference>
<dbReference type="InterPro" id="IPR003018">
    <property type="entry name" value="GAF"/>
</dbReference>
<dbReference type="InterPro" id="IPR029016">
    <property type="entry name" value="GAF-like_dom_sf"/>
</dbReference>
<dbReference type="InterPro" id="IPR036890">
    <property type="entry name" value="HATPase_C_sf"/>
</dbReference>
<dbReference type="InterPro" id="IPR005467">
    <property type="entry name" value="His_kinase_dom"/>
</dbReference>
<dbReference type="InterPro" id="IPR003661">
    <property type="entry name" value="HisK_dim/P_dom"/>
</dbReference>
<dbReference type="InterPro" id="IPR036097">
    <property type="entry name" value="HisK_dim/P_sf"/>
</dbReference>
<dbReference type="InterPro" id="IPR000014">
    <property type="entry name" value="PAS"/>
</dbReference>
<dbReference type="InterPro" id="IPR035965">
    <property type="entry name" value="PAS-like_dom_sf"/>
</dbReference>
<dbReference type="InterPro" id="IPR013654">
    <property type="entry name" value="PAS_2"/>
</dbReference>
<dbReference type="InterPro" id="IPR013767">
    <property type="entry name" value="PAS_fold"/>
</dbReference>
<dbReference type="InterPro" id="IPR044767">
    <property type="entry name" value="Phy_HATPase-like"/>
</dbReference>
<dbReference type="InterPro" id="IPR016132">
    <property type="entry name" value="Phyto_chromo_attachment"/>
</dbReference>
<dbReference type="InterPro" id="IPR013516">
    <property type="entry name" value="Phyto_chromo_BS"/>
</dbReference>
<dbReference type="InterPro" id="IPR001294">
    <property type="entry name" value="Phytochrome"/>
</dbReference>
<dbReference type="InterPro" id="IPR012129">
    <property type="entry name" value="Phytochrome_A-E"/>
</dbReference>
<dbReference type="InterPro" id="IPR013515">
    <property type="entry name" value="Phytochrome_cen-reg"/>
</dbReference>
<dbReference type="InterPro" id="IPR043150">
    <property type="entry name" value="Phytochrome_PHY_sf"/>
</dbReference>
<dbReference type="NCBIfam" id="TIGR00229">
    <property type="entry name" value="sensory_box"/>
    <property type="match status" value="1"/>
</dbReference>
<dbReference type="PANTHER" id="PTHR47876">
    <property type="entry name" value="OS08G0260000 PROTEIN"/>
    <property type="match status" value="1"/>
</dbReference>
<dbReference type="PANTHER" id="PTHR47876:SF3">
    <property type="entry name" value="PHYTOCHROME 1"/>
    <property type="match status" value="1"/>
</dbReference>
<dbReference type="Pfam" id="PF01590">
    <property type="entry name" value="GAF"/>
    <property type="match status" value="1"/>
</dbReference>
<dbReference type="Pfam" id="PF02518">
    <property type="entry name" value="HATPase_c"/>
    <property type="match status" value="1"/>
</dbReference>
<dbReference type="Pfam" id="PF00512">
    <property type="entry name" value="HisKA"/>
    <property type="match status" value="1"/>
</dbReference>
<dbReference type="Pfam" id="PF00989">
    <property type="entry name" value="PAS"/>
    <property type="match status" value="2"/>
</dbReference>
<dbReference type="Pfam" id="PF08446">
    <property type="entry name" value="PAS_2"/>
    <property type="match status" value="1"/>
</dbReference>
<dbReference type="Pfam" id="PF00360">
    <property type="entry name" value="PHY"/>
    <property type="match status" value="1"/>
</dbReference>
<dbReference type="PIRSF" id="PIRSF000084">
    <property type="entry name" value="Phytochrome"/>
    <property type="match status" value="1"/>
</dbReference>
<dbReference type="PRINTS" id="PR01033">
    <property type="entry name" value="PHYTOCHROME"/>
</dbReference>
<dbReference type="SMART" id="SM00065">
    <property type="entry name" value="GAF"/>
    <property type="match status" value="1"/>
</dbReference>
<dbReference type="SMART" id="SM00387">
    <property type="entry name" value="HATPase_c"/>
    <property type="match status" value="1"/>
</dbReference>
<dbReference type="SMART" id="SM00388">
    <property type="entry name" value="HisKA"/>
    <property type="match status" value="1"/>
</dbReference>
<dbReference type="SMART" id="SM00091">
    <property type="entry name" value="PAS"/>
    <property type="match status" value="2"/>
</dbReference>
<dbReference type="SUPFAM" id="SSF55874">
    <property type="entry name" value="ATPase domain of HSP90 chaperone/DNA topoisomerase II/histidine kinase"/>
    <property type="match status" value="1"/>
</dbReference>
<dbReference type="SUPFAM" id="SSF55781">
    <property type="entry name" value="GAF domain-like"/>
    <property type="match status" value="2"/>
</dbReference>
<dbReference type="SUPFAM" id="SSF47384">
    <property type="entry name" value="Homodimeric domain of signal transducing histidine kinase"/>
    <property type="match status" value="1"/>
</dbReference>
<dbReference type="SUPFAM" id="SSF55785">
    <property type="entry name" value="PYP-like sensor domain (PAS domain)"/>
    <property type="match status" value="3"/>
</dbReference>
<dbReference type="PROSITE" id="PS50109">
    <property type="entry name" value="HIS_KIN"/>
    <property type="match status" value="1"/>
</dbReference>
<dbReference type="PROSITE" id="PS50112">
    <property type="entry name" value="PAS"/>
    <property type="match status" value="2"/>
</dbReference>
<dbReference type="PROSITE" id="PS00245">
    <property type="entry name" value="PHYTOCHROME_1"/>
    <property type="match status" value="1"/>
</dbReference>
<dbReference type="PROSITE" id="PS50046">
    <property type="entry name" value="PHYTOCHROME_2"/>
    <property type="match status" value="1"/>
</dbReference>
<gene>
    <name type="primary">PHYB</name>
    <name type="synonym">PHYB1</name>
    <name type="ORF">OsI_010955</name>
</gene>
<keyword id="KW-0157">Chromophore</keyword>
<keyword id="KW-0600">Photoreceptor protein</keyword>
<keyword id="KW-0675">Receptor</keyword>
<keyword id="KW-1185">Reference proteome</keyword>
<keyword id="KW-0677">Repeat</keyword>
<keyword id="KW-0716">Sensory transduction</keyword>
<keyword id="KW-0804">Transcription</keyword>
<keyword id="KW-0805">Transcription regulation</keyword>
<protein>
    <recommendedName>
        <fullName>Phytochrome B</fullName>
    </recommendedName>
</protein>
<accession>A2XFW2</accession>
<accession>P25764</accession>
<accession>Q84LN8</accession>
<name>PHYB_ORYSI</name>
<proteinExistence type="inferred from homology"/>